<sequence length="1091" mass="122847">MCRRKPDIMILTQIEAKEACDWLRATGFPQYAQLYEDLLFPIDISSVKREHDFLDRDAIEALCRRLNTLNKCAVMKLEISPHRKRSEDSDEDEPCAISGKWTFQRDSKRWSRLEEFDVFSSKLDPAPGAPAEAPLKTAASHESMLTELSERQEVASVLSLSSTGSLPVHAPHAGDAATPRTNSVISVCSSGHFVGNDDSFCSLPSPKELSSFSFSMKGQEKNAKSKTRSLLKRMESLKLRGSPHSKHKAPSKLGLIISGPILQEGMDEEKLKQLNCVEISALNGNRINVPAVRKRSVSNSTQTSSSSSQSETSSAVSTPSPVTRTRSLSACNKRVGMYLEGFDPFNQSTFNNVMEQNCKNRESYPEDTVFYIPEDHKPGTFPKALSNGSFPPSGNNSSVNWRTGSFHGPGHISLRRENSSDSPKELKRRNSSSSMSSRLSIYDNVPGSILYSSSGDLADLENEDIFPELDDILYHVKGMQRIVNQWSEKFSDEGDSDSALDSVSPCPSSPKQIHLDVDNDRATPSDLDSTGNSLNEPEEPSDIPERRDSGVGASLTRSNRHRLRWHSFQSSHRPSLNSVSLQINCQSVAQMNLLQKYSLLKLTALLEKYTPSNKHGFSWAVPKFMKRIKVPDYKDRNVFGVPLTVNVQRTGQPLPQSIQQAMRYLRNHCLDQVGLFRKSGVKSRIQALRQMNESAIDCVNYEGQSAYDVADMLKQYFRDLPEPLMTNKLSETFLQIYQCVPKDQRLQAMKAAIMLLPDENREVLQTLLYFLSDVTAAVKENQMTPTNLAVCLAPSLFHLNTLKRENSSPRVMQRKQSLGKPDQKDLNENLAATQGLAHMIAECKKLFQVPEEMSRCRNSYTEQELKPLTLEALGRLRNDESADYQHFLQDCVDSLFKEVKEKFKGWVSYSTSEQAELSYKKVSEGPPLRLWRSTIEVPAMPEEILKRLLKEQHLWDVDLLDSKVIEILDSQTEIYQYVQNSMAPHPARDYVVLRTWRTNLPKGACALLLTSVDHDRAPVVGVRVNVLLSRYLIEPCGSGKSKLTYMCRADLRGHMPEWYTKSFGHLCAAEVVKIRDSFSNQNTETKDTKSR</sequence>
<gene>
    <name type="primary">DLC1</name>
    <name type="synonym">ARHGAP7</name>
    <name type="synonym">STARD12</name>
</gene>
<evidence type="ECO:0000250" key="1"/>
<evidence type="ECO:0000250" key="2">
    <source>
        <dbReference type="UniProtKB" id="Q96QB1"/>
    </source>
</evidence>
<evidence type="ECO:0000255" key="3">
    <source>
        <dbReference type="PROSITE-ProRule" id="PRU00172"/>
    </source>
</evidence>
<evidence type="ECO:0000255" key="4">
    <source>
        <dbReference type="PROSITE-ProRule" id="PRU00197"/>
    </source>
</evidence>
<evidence type="ECO:0000256" key="5">
    <source>
        <dbReference type="SAM" id="MobiDB-lite"/>
    </source>
</evidence>
<keyword id="KW-0965">Cell junction</keyword>
<keyword id="KW-0963">Cytoplasm</keyword>
<keyword id="KW-0343">GTPase activation</keyword>
<keyword id="KW-0472">Membrane</keyword>
<keyword id="KW-0597">Phosphoprotein</keyword>
<keyword id="KW-1185">Reference proteome</keyword>
<keyword id="KW-0043">Tumor suppressor</keyword>
<proteinExistence type="evidence at transcript level"/>
<organism>
    <name type="scientific">Canis lupus familiaris</name>
    <name type="common">Dog</name>
    <name type="synonym">Canis familiaris</name>
    <dbReference type="NCBI Taxonomy" id="9615"/>
    <lineage>
        <taxon>Eukaryota</taxon>
        <taxon>Metazoa</taxon>
        <taxon>Chordata</taxon>
        <taxon>Craniata</taxon>
        <taxon>Vertebrata</taxon>
        <taxon>Euteleostomi</taxon>
        <taxon>Mammalia</taxon>
        <taxon>Eutheria</taxon>
        <taxon>Laurasiatheria</taxon>
        <taxon>Carnivora</taxon>
        <taxon>Caniformia</taxon>
        <taxon>Canidae</taxon>
        <taxon>Canis</taxon>
    </lineage>
</organism>
<protein>
    <recommendedName>
        <fullName>Rho GTPase-activating protein 7</fullName>
    </recommendedName>
    <alternativeName>
        <fullName>Deleted in liver cancer 1 protein homolog</fullName>
        <shortName>DLC-1</shortName>
    </alternativeName>
    <alternativeName>
        <fullName>Rho-type GTPase-activating protein 7</fullName>
    </alternativeName>
    <alternativeName>
        <fullName>START domain-containing protein 12</fullName>
        <shortName>StARD12</shortName>
    </alternativeName>
    <alternativeName>
        <fullName>StAR-related lipid transfer protein 12</fullName>
    </alternativeName>
</protein>
<accession>B9VTT2</accession>
<comment type="function">
    <text evidence="2">Functions as a GTPase-activating protein for the small GTPases RHOA, RHOB, RHOC and CDC42, terminating their downstream signaling. This induces morphological changes and detachment through cytoskeletal reorganization, playing a critical role in biological processes such as cell migration and proliferation. Also functions in vivo as an activator of the phospholipase PLCD1. Active DLC1 increases cell migration velocity but reduces directionality (By similarity). Required for growth factor-induced epithelial cell migration; in resting cells, interacts with TNS3 while PTEN interacts with the p85 regulatory subunit of the PI3K kinase complex but growth factor stimulation induces phosphorylation of TNS3 and PTEN, causing them to change their binding preference so that PTEN interacts with DLC1 and TNS3 interacts with p85 (By similarity). The PTEN-DLC1 complex translocates to the posterior of migrating cells to activate RHOA while the TNS3-p85 complex translocates to the leading edge of migrating cells to promote RAC1 activation (By similarity).</text>
</comment>
<comment type="subunit">
    <text evidence="2">Interacts with EF1A1, facilitates EF1A1 distribution to the membrane periphery and ruffles upon growth factor stimulation and suppresses cell migration. Interacts with tensin TNS1 (via N-terminus); the interaction is decreased by phosphorylation of TNS1. Interacts with TNS3 and PTEN; in resting cells, interacts with TNS3 (via C2 tensin-type domain) but, following growth factor stimulation, TNS3 and PTEN are phosphorylated which leads to weakened interaction with TNS3 and enhanced interaction with PTEN. Interacts (via C-terminus) with tensin TNS4 (via SH2 domain); the interaction is independent of tyrosine phosphorylation of DLC1.</text>
</comment>
<comment type="subcellular location">
    <subcellularLocation>
        <location evidence="1">Cytoplasm</location>
    </subcellularLocation>
    <subcellularLocation>
        <location evidence="2">Cell junction</location>
        <location evidence="2">Focal adhesion</location>
    </subcellularLocation>
    <subcellularLocation>
        <location evidence="1">Membrane</location>
        <topology evidence="1">Peripheral membrane protein</topology>
    </subcellularLocation>
    <text evidence="1">Colocalizes with EF1A1 at actin-rich regions in the cell periphery.</text>
</comment>
<comment type="domain">
    <text evidence="1">The SAM domain mediates interaction with EF1A1, and functions as an autoinhibitory regulator of RhoGAP Activity.</text>
</comment>
<comment type="domain">
    <text evidence="1">The polybasic cluster is required for activation and mediates binding to phosphatidylinositol-4,5-bisphosphate (PI(4,5)P(2)) containing membranes.</text>
</comment>
<reference key="1">
    <citation type="journal article" date="2009" name="BMC Genet.">
        <title>Hypermethylation of the DLC1 CpG island does not alter gene expression in canine lymphoma.</title>
        <authorList>
            <person name="Bryan J.N."/>
            <person name="Jabbes M."/>
            <person name="Berent L.M."/>
            <person name="Arthur G.L."/>
            <person name="Taylor K.H."/>
            <person name="Rissetto K.C."/>
            <person name="Henry C.J."/>
            <person name="Rahmatpanah F."/>
            <person name="Rankin W.V."/>
            <person name="Villamil J.A."/>
            <person name="Lewis M.R."/>
            <person name="Caldwell C.W."/>
        </authorList>
    </citation>
    <scope>NUCLEOTIDE SEQUENCE [MRNA]</scope>
    <source>
        <tissue>Spleen</tissue>
    </source>
</reference>
<name>RHG07_CANLF</name>
<feature type="chain" id="PRO_0000382028" description="Rho GTPase-activating protein 7">
    <location>
        <begin position="1"/>
        <end position="1091"/>
    </location>
</feature>
<feature type="domain" description="SAM">
    <location>
        <begin position="11"/>
        <end position="78"/>
    </location>
</feature>
<feature type="domain" description="Rho-GAP" evidence="3">
    <location>
        <begin position="641"/>
        <end position="847"/>
    </location>
</feature>
<feature type="domain" description="START" evidence="4">
    <location>
        <begin position="877"/>
        <end position="1084"/>
    </location>
</feature>
<feature type="region of interest" description="Focal adhesion-targeting (FAT)" evidence="1">
    <location>
        <begin position="273"/>
        <end position="447"/>
    </location>
</feature>
<feature type="region of interest" description="Disordered" evidence="5">
    <location>
        <begin position="292"/>
        <end position="327"/>
    </location>
</feature>
<feature type="region of interest" description="Disordered" evidence="5">
    <location>
        <begin position="382"/>
        <end position="439"/>
    </location>
</feature>
<feature type="region of interest" description="Disordered" evidence="5">
    <location>
        <begin position="491"/>
        <end position="553"/>
    </location>
</feature>
<feature type="region of interest" description="Polybasic cluster (PBR)" evidence="1">
    <location>
        <begin position="614"/>
        <end position="636"/>
    </location>
</feature>
<feature type="compositionally biased region" description="Low complexity" evidence="5">
    <location>
        <begin position="297"/>
        <end position="323"/>
    </location>
</feature>
<feature type="compositionally biased region" description="Low complexity" evidence="5">
    <location>
        <begin position="386"/>
        <end position="400"/>
    </location>
</feature>
<feature type="compositionally biased region" description="Basic and acidic residues" evidence="5">
    <location>
        <begin position="414"/>
        <end position="425"/>
    </location>
</feature>
<feature type="compositionally biased region" description="Polar residues" evidence="5">
    <location>
        <begin position="499"/>
        <end position="511"/>
    </location>
</feature>
<feature type="compositionally biased region" description="Basic and acidic residues" evidence="5">
    <location>
        <begin position="513"/>
        <end position="523"/>
    </location>
</feature>
<feature type="compositionally biased region" description="Polar residues" evidence="5">
    <location>
        <begin position="526"/>
        <end position="535"/>
    </location>
</feature>
<feature type="site" description="Arginine finger; crucial for GTP hydrolysis by stabilizing the transition state" evidence="3">
    <location>
        <position position="677"/>
    </location>
</feature>
<feature type="modified residue" description="Phosphoserine" evidence="2">
    <location>
        <position position="86"/>
    </location>
</feature>
<feature type="modified residue" description="Phosphoserine" evidence="2">
    <location>
        <position position="89"/>
    </location>
</feature>
<feature type="modified residue" description="Phosphoserine" evidence="2">
    <location>
        <position position="320"/>
    </location>
</feature>
<dbReference type="EMBL" id="FJ602870">
    <property type="protein sequence ID" value="ACM44925.1"/>
    <property type="molecule type" value="mRNA"/>
</dbReference>
<dbReference type="RefSeq" id="NP_001138543.1">
    <property type="nucleotide sequence ID" value="NM_001145071.1"/>
</dbReference>
<dbReference type="RefSeq" id="NP_001300726.1">
    <property type="nucleotide sequence ID" value="NM_001313797.1"/>
</dbReference>
<dbReference type="SMR" id="B9VTT2"/>
<dbReference type="FunCoup" id="B9VTT2">
    <property type="interactions" value="123"/>
</dbReference>
<dbReference type="STRING" id="9615.ENSCAFP00000010111"/>
<dbReference type="PaxDb" id="9612-ENSCAFP00000010111"/>
<dbReference type="GeneID" id="475607"/>
<dbReference type="KEGG" id="cfa:475607"/>
<dbReference type="CTD" id="10395"/>
<dbReference type="eggNOG" id="KOG2200">
    <property type="taxonomic scope" value="Eukaryota"/>
</dbReference>
<dbReference type="HOGENOM" id="CLU_004367_0_0_1"/>
<dbReference type="InParanoid" id="B9VTT2"/>
<dbReference type="OrthoDB" id="10003330at2759"/>
<dbReference type="Proteomes" id="UP000002254">
    <property type="component" value="Chromosome 16"/>
</dbReference>
<dbReference type="Proteomes" id="UP000694429">
    <property type="component" value="Unplaced"/>
</dbReference>
<dbReference type="Proteomes" id="UP000694542">
    <property type="component" value="Unplaced"/>
</dbReference>
<dbReference type="Proteomes" id="UP000805418">
    <property type="component" value="Unplaced"/>
</dbReference>
<dbReference type="Bgee" id="ENSCAFG00000006766">
    <property type="expression patterns" value="Expressed in mucosa of urinary bladder and 45 other cell types or tissues"/>
</dbReference>
<dbReference type="GO" id="GO:0005737">
    <property type="term" value="C:cytoplasm"/>
    <property type="evidence" value="ECO:0007669"/>
    <property type="project" value="UniProtKB-SubCell"/>
</dbReference>
<dbReference type="GO" id="GO:0005925">
    <property type="term" value="C:focal adhesion"/>
    <property type="evidence" value="ECO:0000318"/>
    <property type="project" value="GO_Central"/>
</dbReference>
<dbReference type="GO" id="GO:0045121">
    <property type="term" value="C:membrane raft"/>
    <property type="evidence" value="ECO:0000318"/>
    <property type="project" value="GO_Central"/>
</dbReference>
<dbReference type="GO" id="GO:0005096">
    <property type="term" value="F:GTPase activator activity"/>
    <property type="evidence" value="ECO:0000318"/>
    <property type="project" value="GO_Central"/>
</dbReference>
<dbReference type="GO" id="GO:0008289">
    <property type="term" value="F:lipid binding"/>
    <property type="evidence" value="ECO:0007669"/>
    <property type="project" value="InterPro"/>
</dbReference>
<dbReference type="GO" id="GO:0030036">
    <property type="term" value="P:actin cytoskeleton organization"/>
    <property type="evidence" value="ECO:0000318"/>
    <property type="project" value="GO_Central"/>
</dbReference>
<dbReference type="GO" id="GO:0035023">
    <property type="term" value="P:regulation of Rho protein signal transduction"/>
    <property type="evidence" value="ECO:0000318"/>
    <property type="project" value="GO_Central"/>
</dbReference>
<dbReference type="GO" id="GO:0007165">
    <property type="term" value="P:signal transduction"/>
    <property type="evidence" value="ECO:0007669"/>
    <property type="project" value="InterPro"/>
</dbReference>
<dbReference type="CDD" id="cd04375">
    <property type="entry name" value="RhoGAP_DLC1"/>
    <property type="match status" value="1"/>
</dbReference>
<dbReference type="CDD" id="cd09538">
    <property type="entry name" value="SAM_DLC1_2-like"/>
    <property type="match status" value="1"/>
</dbReference>
<dbReference type="CDD" id="cd08908">
    <property type="entry name" value="START_STARD12-like"/>
    <property type="match status" value="1"/>
</dbReference>
<dbReference type="FunFam" id="3.30.530.20:FF:000010">
    <property type="entry name" value="rho GTPase-activating protein 7 isoform X1"/>
    <property type="match status" value="1"/>
</dbReference>
<dbReference type="FunFam" id="1.10.555.10:FF:000007">
    <property type="entry name" value="rho GTPase-activating protein 7 isoform X2"/>
    <property type="match status" value="1"/>
</dbReference>
<dbReference type="FunFam" id="1.10.287.2070:FF:000001">
    <property type="entry name" value="StAR-related lipid transfer domain-containing 13"/>
    <property type="match status" value="1"/>
</dbReference>
<dbReference type="Gene3D" id="1.10.287.2070">
    <property type="match status" value="1"/>
</dbReference>
<dbReference type="Gene3D" id="3.30.530.20">
    <property type="match status" value="1"/>
</dbReference>
<dbReference type="Gene3D" id="1.10.555.10">
    <property type="entry name" value="Rho GTPase activation protein"/>
    <property type="match status" value="1"/>
</dbReference>
<dbReference type="InterPro" id="IPR008936">
    <property type="entry name" value="Rho_GTPase_activation_prot"/>
</dbReference>
<dbReference type="InterPro" id="IPR000198">
    <property type="entry name" value="RhoGAP_dom"/>
</dbReference>
<dbReference type="InterPro" id="IPR001660">
    <property type="entry name" value="SAM"/>
</dbReference>
<dbReference type="InterPro" id="IPR013761">
    <property type="entry name" value="SAM/pointed_sf"/>
</dbReference>
<dbReference type="InterPro" id="IPR023393">
    <property type="entry name" value="START-like_dom_sf"/>
</dbReference>
<dbReference type="InterPro" id="IPR002913">
    <property type="entry name" value="START_lipid-bd_dom"/>
</dbReference>
<dbReference type="PANTHER" id="PTHR12659:SF2">
    <property type="entry name" value="RHO GTPASE-ACTIVATING PROTEIN 7"/>
    <property type="match status" value="1"/>
</dbReference>
<dbReference type="PANTHER" id="PTHR12659">
    <property type="entry name" value="RHO-TYPE GTPASE ACTIVATING PROTEIN"/>
    <property type="match status" value="1"/>
</dbReference>
<dbReference type="Pfam" id="PF00620">
    <property type="entry name" value="RhoGAP"/>
    <property type="match status" value="1"/>
</dbReference>
<dbReference type="Pfam" id="PF07647">
    <property type="entry name" value="SAM_2"/>
    <property type="match status" value="1"/>
</dbReference>
<dbReference type="Pfam" id="PF01852">
    <property type="entry name" value="START"/>
    <property type="match status" value="1"/>
</dbReference>
<dbReference type="SMART" id="SM00324">
    <property type="entry name" value="RhoGAP"/>
    <property type="match status" value="1"/>
</dbReference>
<dbReference type="SMART" id="SM00234">
    <property type="entry name" value="START"/>
    <property type="match status" value="1"/>
</dbReference>
<dbReference type="SUPFAM" id="SSF55961">
    <property type="entry name" value="Bet v1-like"/>
    <property type="match status" value="1"/>
</dbReference>
<dbReference type="SUPFAM" id="SSF48350">
    <property type="entry name" value="GTPase activation domain, GAP"/>
    <property type="match status" value="1"/>
</dbReference>
<dbReference type="SUPFAM" id="SSF47769">
    <property type="entry name" value="SAM/Pointed domain"/>
    <property type="match status" value="1"/>
</dbReference>
<dbReference type="PROSITE" id="PS50238">
    <property type="entry name" value="RHOGAP"/>
    <property type="match status" value="1"/>
</dbReference>
<dbReference type="PROSITE" id="PS50848">
    <property type="entry name" value="START"/>
    <property type="match status" value="1"/>
</dbReference>